<comment type="function">
    <text evidence="1">PCNA-binding protein that acts as a regulator of DNA repair during DNA replication. Following DNA damage, the interaction with pcna is disrupted, facilitating the interaction between monoubiquitinated pcna and the translesion DNA synthesis DNA polymerase eta (polh) at stalled replisomes, facilitating the bypass of replication-fork-blocking lesions. Also acts as a regulator of centrosome number (By similarity).</text>
</comment>
<comment type="subunit">
    <text evidence="1">Interacts with pcna.</text>
</comment>
<comment type="subcellular location">
    <subcellularLocation>
        <location evidence="2">Nucleus</location>
    </subcellularLocation>
    <subcellularLocation>
        <location evidence="2">Cytoplasm</location>
        <location evidence="2">Perinuclear region</location>
    </subcellularLocation>
    <text evidence="2">Following DNA damage, localizes to DNA damage sites. Colocalizes with centrosomes in perinuclear region.</text>
</comment>
<protein>
    <recommendedName>
        <fullName evidence="4">PCNA-associated factor</fullName>
    </recommendedName>
    <alternativeName>
        <fullName>PCNA-associated factor of 15 kDa</fullName>
        <shortName>PAF15</shortName>
        <shortName>p15PAF</shortName>
    </alternativeName>
    <alternativeName>
        <fullName evidence="2">PCNA-clamp-associated factor</fullName>
    </alternativeName>
</protein>
<gene>
    <name evidence="2" type="primary">pclaf</name>
    <name type="synonym">paf</name>
</gene>
<accession>Q5HZL4</accession>
<dbReference type="EMBL" id="BC088968">
    <property type="protein sequence ID" value="AAH88968.1"/>
    <property type="molecule type" value="mRNA"/>
</dbReference>
<dbReference type="RefSeq" id="NP_001088983.1">
    <property type="nucleotide sequence ID" value="NM_001095514.1"/>
</dbReference>
<dbReference type="BioGRID" id="106445">
    <property type="interactions" value="122"/>
</dbReference>
<dbReference type="DNASU" id="496365"/>
<dbReference type="GeneID" id="496365"/>
<dbReference type="KEGG" id="xla:496365"/>
<dbReference type="AGR" id="Xenbase:XB-GENE-6486199"/>
<dbReference type="CTD" id="496365"/>
<dbReference type="Xenbase" id="XB-GENE-6486199">
    <property type="gene designation" value="pclaf.S"/>
</dbReference>
<dbReference type="OMA" id="NAYCPRP"/>
<dbReference type="OrthoDB" id="7479084at2759"/>
<dbReference type="Proteomes" id="UP000186698">
    <property type="component" value="Chromosome 3S"/>
</dbReference>
<dbReference type="Bgee" id="496365">
    <property type="expression patterns" value="Expressed in oocyte and 15 other cell types or tissues"/>
</dbReference>
<dbReference type="GO" id="GO:0005634">
    <property type="term" value="C:nucleus"/>
    <property type="evidence" value="ECO:0000250"/>
    <property type="project" value="UniProtKB"/>
</dbReference>
<dbReference type="GO" id="GO:0048471">
    <property type="term" value="C:perinuclear region of cytoplasm"/>
    <property type="evidence" value="ECO:0000250"/>
    <property type="project" value="UniProtKB"/>
</dbReference>
<dbReference type="GO" id="GO:0003682">
    <property type="term" value="F:chromatin binding"/>
    <property type="evidence" value="ECO:0000250"/>
    <property type="project" value="UniProtKB"/>
</dbReference>
<dbReference type="GO" id="GO:0007098">
    <property type="term" value="P:centrosome cycle"/>
    <property type="evidence" value="ECO:0000250"/>
    <property type="project" value="UniProtKB"/>
</dbReference>
<dbReference type="GO" id="GO:0006974">
    <property type="term" value="P:DNA damage response"/>
    <property type="evidence" value="ECO:0000250"/>
    <property type="project" value="UniProtKB"/>
</dbReference>
<dbReference type="GO" id="GO:0006260">
    <property type="term" value="P:DNA replication"/>
    <property type="evidence" value="ECO:0000250"/>
    <property type="project" value="UniProtKB"/>
</dbReference>
<dbReference type="GO" id="GO:0051726">
    <property type="term" value="P:regulation of cell cycle"/>
    <property type="evidence" value="ECO:0000250"/>
    <property type="project" value="UniProtKB"/>
</dbReference>
<dbReference type="GO" id="GO:0009411">
    <property type="term" value="P:response to UV"/>
    <property type="evidence" value="ECO:0000250"/>
    <property type="project" value="UniProtKB"/>
</dbReference>
<dbReference type="GO" id="GO:0019985">
    <property type="term" value="P:translesion synthesis"/>
    <property type="evidence" value="ECO:0000250"/>
    <property type="project" value="UniProtKB"/>
</dbReference>
<dbReference type="InterPro" id="IPR040444">
    <property type="entry name" value="PCNA-AF"/>
</dbReference>
<dbReference type="InterPro" id="IPR031444">
    <property type="entry name" value="PCNA-AF_dom"/>
</dbReference>
<dbReference type="PANTHER" id="PTHR15679">
    <property type="entry name" value="PCNA-ASSOCIATED FACTOR"/>
    <property type="match status" value="1"/>
</dbReference>
<dbReference type="PANTHER" id="PTHR15679:SF8">
    <property type="entry name" value="PCNA-ASSOCIATED FACTOR"/>
    <property type="match status" value="1"/>
</dbReference>
<dbReference type="Pfam" id="PF15715">
    <property type="entry name" value="PAF"/>
    <property type="match status" value="1"/>
</dbReference>
<reference key="1">
    <citation type="submission" date="2005-01" db="EMBL/GenBank/DDBJ databases">
        <authorList>
            <consortium name="NIH - Xenopus Gene Collection (XGC) project"/>
        </authorList>
    </citation>
    <scope>NUCLEOTIDE SEQUENCE [LARGE SCALE MRNA]</scope>
    <source>
        <tissue>Egg</tissue>
    </source>
</reference>
<name>PAF15_XENLA</name>
<sequence length="123" mass="12772">MVRTKADCAGSSSGSYRKAVAARAPRKTFGSSSSGSNHDTSPTGKKSECKYAGGNPVCVRPIPTWQKGIGDFFGSPSTSQPEKENRIPSDDEEAGGSGAGKKPRKSRPLPPDPSEEAADSGDE</sequence>
<keyword id="KW-0963">Cytoplasm</keyword>
<keyword id="KW-0227">DNA damage</keyword>
<keyword id="KW-0234">DNA repair</keyword>
<keyword id="KW-0539">Nucleus</keyword>
<keyword id="KW-1185">Reference proteome</keyword>
<feature type="chain" id="PRO_0000420482" description="PCNA-associated factor">
    <location>
        <begin position="1"/>
        <end position="123"/>
    </location>
</feature>
<feature type="region of interest" description="Disordered" evidence="3">
    <location>
        <begin position="1"/>
        <end position="123"/>
    </location>
</feature>
<feature type="short sequence motif" description="D-box">
    <location>
        <begin position="26"/>
        <end position="37"/>
    </location>
</feature>
<feature type="short sequence motif" description="PIP-box">
    <location>
        <begin position="66"/>
        <end position="77"/>
    </location>
</feature>
<feature type="short sequence motif" description="KEN box">
    <location>
        <begin position="83"/>
        <end position="85"/>
    </location>
</feature>
<feature type="short sequence motif" description="Initiation motif">
    <location>
        <begin position="93"/>
        <end position="105"/>
    </location>
</feature>
<feature type="compositionally biased region" description="Acidic residues" evidence="3">
    <location>
        <begin position="113"/>
        <end position="123"/>
    </location>
</feature>
<proteinExistence type="evidence at transcript level"/>
<evidence type="ECO:0000250" key="1"/>
<evidence type="ECO:0000250" key="2">
    <source>
        <dbReference type="UniProtKB" id="Q15004"/>
    </source>
</evidence>
<evidence type="ECO:0000256" key="3">
    <source>
        <dbReference type="SAM" id="MobiDB-lite"/>
    </source>
</evidence>
<evidence type="ECO:0000305" key="4"/>
<organism>
    <name type="scientific">Xenopus laevis</name>
    <name type="common">African clawed frog</name>
    <dbReference type="NCBI Taxonomy" id="8355"/>
    <lineage>
        <taxon>Eukaryota</taxon>
        <taxon>Metazoa</taxon>
        <taxon>Chordata</taxon>
        <taxon>Craniata</taxon>
        <taxon>Vertebrata</taxon>
        <taxon>Euteleostomi</taxon>
        <taxon>Amphibia</taxon>
        <taxon>Batrachia</taxon>
        <taxon>Anura</taxon>
        <taxon>Pipoidea</taxon>
        <taxon>Pipidae</taxon>
        <taxon>Xenopodinae</taxon>
        <taxon>Xenopus</taxon>
        <taxon>Xenopus</taxon>
    </lineage>
</organism>